<name>YIDC_PSET1</name>
<gene>
    <name evidence="1" type="primary">yidC</name>
    <name type="ordered locus">PSHAa3022</name>
</gene>
<feature type="chain" id="PRO_1000070141" description="Membrane protein insertase YidC">
    <location>
        <begin position="1"/>
        <end position="544"/>
    </location>
</feature>
<feature type="transmembrane region" description="Helical" evidence="1">
    <location>
        <begin position="341"/>
        <end position="361"/>
    </location>
</feature>
<feature type="transmembrane region" description="Helical" evidence="1">
    <location>
        <begin position="421"/>
        <end position="441"/>
    </location>
</feature>
<feature type="transmembrane region" description="Helical" evidence="1">
    <location>
        <begin position="499"/>
        <end position="519"/>
    </location>
</feature>
<feature type="region of interest" description="Disordered" evidence="2">
    <location>
        <begin position="29"/>
        <end position="58"/>
    </location>
</feature>
<feature type="compositionally biased region" description="Polar residues" evidence="2">
    <location>
        <begin position="35"/>
        <end position="46"/>
    </location>
</feature>
<keyword id="KW-0997">Cell inner membrane</keyword>
<keyword id="KW-1003">Cell membrane</keyword>
<keyword id="KW-0143">Chaperone</keyword>
<keyword id="KW-0472">Membrane</keyword>
<keyword id="KW-0653">Protein transport</keyword>
<keyword id="KW-1185">Reference proteome</keyword>
<keyword id="KW-0812">Transmembrane</keyword>
<keyword id="KW-1133">Transmembrane helix</keyword>
<keyword id="KW-0813">Transport</keyword>
<proteinExistence type="inferred from homology"/>
<reference key="1">
    <citation type="journal article" date="2005" name="Genome Res.">
        <title>Coping with cold: the genome of the versatile marine Antarctica bacterium Pseudoalteromonas haloplanktis TAC125.</title>
        <authorList>
            <person name="Medigue C."/>
            <person name="Krin E."/>
            <person name="Pascal G."/>
            <person name="Barbe V."/>
            <person name="Bernsel A."/>
            <person name="Bertin P.N."/>
            <person name="Cheung F."/>
            <person name="Cruveiller S."/>
            <person name="D'Amico S."/>
            <person name="Duilio A."/>
            <person name="Fang G."/>
            <person name="Feller G."/>
            <person name="Ho C."/>
            <person name="Mangenot S."/>
            <person name="Marino G."/>
            <person name="Nilsson J."/>
            <person name="Parrilli E."/>
            <person name="Rocha E.P.C."/>
            <person name="Rouy Z."/>
            <person name="Sekowska A."/>
            <person name="Tutino M.L."/>
            <person name="Vallenet D."/>
            <person name="von Heijne G."/>
            <person name="Danchin A."/>
        </authorList>
    </citation>
    <scope>NUCLEOTIDE SEQUENCE [LARGE SCALE GENOMIC DNA]</scope>
    <source>
        <strain>TAC 125</strain>
    </source>
</reference>
<dbReference type="EMBL" id="CR954246">
    <property type="protein sequence ID" value="CAI88051.1"/>
    <property type="molecule type" value="Genomic_DNA"/>
</dbReference>
<dbReference type="SMR" id="Q3IK55"/>
<dbReference type="STRING" id="326442.PSHAa3022"/>
<dbReference type="KEGG" id="pha:PSHAa3022"/>
<dbReference type="PATRIC" id="fig|326442.8.peg.2912"/>
<dbReference type="eggNOG" id="COG0706">
    <property type="taxonomic scope" value="Bacteria"/>
</dbReference>
<dbReference type="HOGENOM" id="CLU_016535_3_0_6"/>
<dbReference type="BioCyc" id="PHAL326442:PSHA_RS14830-MONOMER"/>
<dbReference type="Proteomes" id="UP000006843">
    <property type="component" value="Chromosome I"/>
</dbReference>
<dbReference type="GO" id="GO:0005886">
    <property type="term" value="C:plasma membrane"/>
    <property type="evidence" value="ECO:0007669"/>
    <property type="project" value="UniProtKB-SubCell"/>
</dbReference>
<dbReference type="GO" id="GO:0032977">
    <property type="term" value="F:membrane insertase activity"/>
    <property type="evidence" value="ECO:0007669"/>
    <property type="project" value="InterPro"/>
</dbReference>
<dbReference type="GO" id="GO:0051205">
    <property type="term" value="P:protein insertion into membrane"/>
    <property type="evidence" value="ECO:0007669"/>
    <property type="project" value="TreeGrafter"/>
</dbReference>
<dbReference type="GO" id="GO:0015031">
    <property type="term" value="P:protein transport"/>
    <property type="evidence" value="ECO:0007669"/>
    <property type="project" value="UniProtKB-KW"/>
</dbReference>
<dbReference type="CDD" id="cd20070">
    <property type="entry name" value="5TM_YidC_Alb3"/>
    <property type="match status" value="1"/>
</dbReference>
<dbReference type="CDD" id="cd19961">
    <property type="entry name" value="EcYidC-like_peri"/>
    <property type="match status" value="1"/>
</dbReference>
<dbReference type="Gene3D" id="2.70.98.90">
    <property type="match status" value="1"/>
</dbReference>
<dbReference type="HAMAP" id="MF_01810">
    <property type="entry name" value="YidC_type1"/>
    <property type="match status" value="1"/>
</dbReference>
<dbReference type="InterPro" id="IPR019998">
    <property type="entry name" value="Membr_insert_YidC"/>
</dbReference>
<dbReference type="InterPro" id="IPR028053">
    <property type="entry name" value="Membr_insert_YidC_N"/>
</dbReference>
<dbReference type="InterPro" id="IPR001708">
    <property type="entry name" value="YidC/ALB3/OXA1/COX18"/>
</dbReference>
<dbReference type="InterPro" id="IPR028055">
    <property type="entry name" value="YidC/Oxa/ALB_C"/>
</dbReference>
<dbReference type="InterPro" id="IPR047196">
    <property type="entry name" value="YidC_ALB_C"/>
</dbReference>
<dbReference type="InterPro" id="IPR038221">
    <property type="entry name" value="YidC_periplasmic_sf"/>
</dbReference>
<dbReference type="NCBIfam" id="NF002351">
    <property type="entry name" value="PRK01318.1-1"/>
    <property type="match status" value="1"/>
</dbReference>
<dbReference type="NCBIfam" id="NF002352">
    <property type="entry name" value="PRK01318.1-3"/>
    <property type="match status" value="1"/>
</dbReference>
<dbReference type="NCBIfam" id="TIGR03593">
    <property type="entry name" value="yidC_nterm"/>
    <property type="match status" value="1"/>
</dbReference>
<dbReference type="NCBIfam" id="TIGR03592">
    <property type="entry name" value="yidC_oxa1_cterm"/>
    <property type="match status" value="1"/>
</dbReference>
<dbReference type="PANTHER" id="PTHR12428:SF65">
    <property type="entry name" value="CYTOCHROME C OXIDASE ASSEMBLY PROTEIN COX18, MITOCHONDRIAL"/>
    <property type="match status" value="1"/>
</dbReference>
<dbReference type="PANTHER" id="PTHR12428">
    <property type="entry name" value="OXA1"/>
    <property type="match status" value="1"/>
</dbReference>
<dbReference type="Pfam" id="PF02096">
    <property type="entry name" value="60KD_IMP"/>
    <property type="match status" value="1"/>
</dbReference>
<dbReference type="Pfam" id="PF14849">
    <property type="entry name" value="YidC_periplas"/>
    <property type="match status" value="1"/>
</dbReference>
<dbReference type="PRINTS" id="PR00701">
    <property type="entry name" value="60KDINNERMP"/>
</dbReference>
<dbReference type="PRINTS" id="PR01900">
    <property type="entry name" value="YIDCPROTEIN"/>
</dbReference>
<accession>Q3IK55</accession>
<sequence length="544" mass="61576">MESQRTFLFIGLMLVSFLLFQEWNTDYNTPKADPSATTQTLNPTSSESEDYVPTSSDSALPASATLAKRSVIEITTDVFKVKIDTRGGDIVETYLLQYEETKGSETPYMLLGEFDGKQYFSQSGLIGLNGPDASAQGRPTYHVEQKSYTLTGDELRVPLQFTDSNGVNFTKTYVFKKGQYDVALEYTINNTTSTPLQVQLYTQVKRTVQDKGSMVDQNYLGAAYGTDDDPYEKYSFSDMADKNLNKITLGGYVAFIQHYFVSAWVPMQDQSNTLYSLITKSNAAIIGVKDEAVNIQAGSEQTLTATYYMGPKESDVLEAIHPDLDLTVDYGWLWFISQPLFVLLKWLHSILGNWGVAIIAITIIVKSLMYPLTKAQYTSMAKMRALQPKMAALKEKFGDDRQKFGQATMEMYKKEKVNPMGGCFPILLQMPIFLALFYVFLESTELRHAEFIFWLTDLSAKDPYYVLPILFGASMFITQKLQPMTVTDPMQQKMMTFMPVIFSVFFLWFPSGLVLYWLVSNLISIVQMLIIYRGMEKKGIKVRG</sequence>
<protein>
    <recommendedName>
        <fullName evidence="1">Membrane protein insertase YidC</fullName>
    </recommendedName>
    <alternativeName>
        <fullName evidence="1">Foldase YidC</fullName>
    </alternativeName>
    <alternativeName>
        <fullName evidence="1">Membrane integrase YidC</fullName>
    </alternativeName>
    <alternativeName>
        <fullName evidence="1">Membrane protein YidC</fullName>
    </alternativeName>
</protein>
<organism>
    <name type="scientific">Pseudoalteromonas translucida (strain TAC 125)</name>
    <dbReference type="NCBI Taxonomy" id="326442"/>
    <lineage>
        <taxon>Bacteria</taxon>
        <taxon>Pseudomonadati</taxon>
        <taxon>Pseudomonadota</taxon>
        <taxon>Gammaproteobacteria</taxon>
        <taxon>Alteromonadales</taxon>
        <taxon>Pseudoalteromonadaceae</taxon>
        <taxon>Pseudoalteromonas</taxon>
    </lineage>
</organism>
<comment type="function">
    <text evidence="1">Required for the insertion and/or proper folding and/or complex formation of integral membrane proteins into the membrane. Involved in integration of membrane proteins that insert both dependently and independently of the Sec translocase complex, as well as at least some lipoproteins. Aids folding of multispanning membrane proteins.</text>
</comment>
<comment type="subunit">
    <text evidence="1">Interacts with the Sec translocase complex via SecD. Specifically interacts with transmembrane segments of nascent integral membrane proteins during membrane integration.</text>
</comment>
<comment type="subcellular location">
    <subcellularLocation>
        <location evidence="1">Cell inner membrane</location>
        <topology evidence="1">Multi-pass membrane protein</topology>
    </subcellularLocation>
</comment>
<comment type="similarity">
    <text evidence="1">Belongs to the OXA1/ALB3/YidC family. Type 1 subfamily.</text>
</comment>
<evidence type="ECO:0000255" key="1">
    <source>
        <dbReference type="HAMAP-Rule" id="MF_01810"/>
    </source>
</evidence>
<evidence type="ECO:0000256" key="2">
    <source>
        <dbReference type="SAM" id="MobiDB-lite"/>
    </source>
</evidence>